<name>EFTS_LACLM</name>
<keyword id="KW-0963">Cytoplasm</keyword>
<keyword id="KW-0251">Elongation factor</keyword>
<keyword id="KW-0648">Protein biosynthesis</keyword>
<evidence type="ECO:0000255" key="1">
    <source>
        <dbReference type="HAMAP-Rule" id="MF_00050"/>
    </source>
</evidence>
<feature type="chain" id="PRO_1000006115" description="Elongation factor Ts">
    <location>
        <begin position="1"/>
        <end position="342"/>
    </location>
</feature>
<feature type="region of interest" description="Involved in Mg(2+) ion dislocation from EF-Tu" evidence="1">
    <location>
        <begin position="79"/>
        <end position="82"/>
    </location>
</feature>
<dbReference type="EMBL" id="AM406671">
    <property type="protein sequence ID" value="CAL98993.1"/>
    <property type="molecule type" value="Genomic_DNA"/>
</dbReference>
<dbReference type="RefSeq" id="WP_011677206.1">
    <property type="nucleotide sequence ID" value="NC_009004.1"/>
</dbReference>
<dbReference type="SMR" id="A2RNU9"/>
<dbReference type="STRING" id="416870.llmg_2429"/>
<dbReference type="GeneID" id="61110477"/>
<dbReference type="KEGG" id="llm:llmg_2429"/>
<dbReference type="eggNOG" id="COG0264">
    <property type="taxonomic scope" value="Bacteria"/>
</dbReference>
<dbReference type="HOGENOM" id="CLU_047155_0_1_9"/>
<dbReference type="OrthoDB" id="9808348at2"/>
<dbReference type="PhylomeDB" id="A2RNU9"/>
<dbReference type="Proteomes" id="UP000000364">
    <property type="component" value="Chromosome"/>
</dbReference>
<dbReference type="GO" id="GO:0005737">
    <property type="term" value="C:cytoplasm"/>
    <property type="evidence" value="ECO:0007669"/>
    <property type="project" value="UniProtKB-SubCell"/>
</dbReference>
<dbReference type="GO" id="GO:0003746">
    <property type="term" value="F:translation elongation factor activity"/>
    <property type="evidence" value="ECO:0007669"/>
    <property type="project" value="UniProtKB-UniRule"/>
</dbReference>
<dbReference type="CDD" id="cd14275">
    <property type="entry name" value="UBA_EF-Ts"/>
    <property type="match status" value="1"/>
</dbReference>
<dbReference type="FunFam" id="1.10.286.20:FF:000004">
    <property type="entry name" value="Elongation factor Ts"/>
    <property type="match status" value="1"/>
</dbReference>
<dbReference type="FunFam" id="1.10.8.10:FF:000001">
    <property type="entry name" value="Elongation factor Ts"/>
    <property type="match status" value="1"/>
</dbReference>
<dbReference type="Gene3D" id="1.10.286.20">
    <property type="match status" value="1"/>
</dbReference>
<dbReference type="Gene3D" id="1.10.8.10">
    <property type="entry name" value="DNA helicase RuvA subunit, C-terminal domain"/>
    <property type="match status" value="1"/>
</dbReference>
<dbReference type="Gene3D" id="3.30.479.20">
    <property type="entry name" value="Elongation factor Ts, dimerisation domain"/>
    <property type="match status" value="2"/>
</dbReference>
<dbReference type="HAMAP" id="MF_00050">
    <property type="entry name" value="EF_Ts"/>
    <property type="match status" value="1"/>
</dbReference>
<dbReference type="InterPro" id="IPR036402">
    <property type="entry name" value="EF-Ts_dimer_sf"/>
</dbReference>
<dbReference type="InterPro" id="IPR001816">
    <property type="entry name" value="Transl_elong_EFTs/EF1B"/>
</dbReference>
<dbReference type="InterPro" id="IPR014039">
    <property type="entry name" value="Transl_elong_EFTs/EF1B_dimer"/>
</dbReference>
<dbReference type="InterPro" id="IPR018101">
    <property type="entry name" value="Transl_elong_Ts_CS"/>
</dbReference>
<dbReference type="InterPro" id="IPR009060">
    <property type="entry name" value="UBA-like_sf"/>
</dbReference>
<dbReference type="NCBIfam" id="TIGR00116">
    <property type="entry name" value="tsf"/>
    <property type="match status" value="1"/>
</dbReference>
<dbReference type="PANTHER" id="PTHR11741">
    <property type="entry name" value="ELONGATION FACTOR TS"/>
    <property type="match status" value="1"/>
</dbReference>
<dbReference type="PANTHER" id="PTHR11741:SF0">
    <property type="entry name" value="ELONGATION FACTOR TS, MITOCHONDRIAL"/>
    <property type="match status" value="1"/>
</dbReference>
<dbReference type="Pfam" id="PF00889">
    <property type="entry name" value="EF_TS"/>
    <property type="match status" value="2"/>
</dbReference>
<dbReference type="SUPFAM" id="SSF54713">
    <property type="entry name" value="Elongation factor Ts (EF-Ts), dimerisation domain"/>
    <property type="match status" value="1"/>
</dbReference>
<dbReference type="SUPFAM" id="SSF46934">
    <property type="entry name" value="UBA-like"/>
    <property type="match status" value="1"/>
</dbReference>
<dbReference type="PROSITE" id="PS01126">
    <property type="entry name" value="EF_TS_1"/>
    <property type="match status" value="1"/>
</dbReference>
<dbReference type="PROSITE" id="PS01127">
    <property type="entry name" value="EF_TS_2"/>
    <property type="match status" value="1"/>
</dbReference>
<gene>
    <name evidence="1" type="primary">tsf</name>
    <name type="ordered locus">llmg_2429</name>
</gene>
<protein>
    <recommendedName>
        <fullName evidence="1">Elongation factor Ts</fullName>
        <shortName evidence="1">EF-Ts</shortName>
    </recommendedName>
</protein>
<accession>A2RNU9</accession>
<organism>
    <name type="scientific">Lactococcus lactis subsp. cremoris (strain MG1363)</name>
    <dbReference type="NCBI Taxonomy" id="416870"/>
    <lineage>
        <taxon>Bacteria</taxon>
        <taxon>Bacillati</taxon>
        <taxon>Bacillota</taxon>
        <taxon>Bacilli</taxon>
        <taxon>Lactobacillales</taxon>
        <taxon>Streptococcaceae</taxon>
        <taxon>Lactococcus</taxon>
        <taxon>Lactococcus cremoris subsp. cremoris</taxon>
    </lineage>
</organism>
<sequence>MAVTAAQVKELREKTGAGIMDAKRALVETDGNMEAAAELLREKGIAKAAKKADRVAAEGLTGIAVNGNVAALVELNSETDFVAKNDQFVALVKETAELLAASKPANNEEALAIKTASGVTLEQELVQATATIGEKITFRRFVVIEKTDAQHFGAYQHNGGKIGVISVIEGADETLAKQVSMHIAAMNPTVLSADELDSEFVKAELAQMNHKIDEDNASRVLVNKPELPHHEYGSKSQLTEEVLAAAKASFEEELKAEGKPEKIWDKILPGKMAKFIVDNTKVDQQFALLAQLYIMDDSKTVEAFLESKGAKAIAFTRFEVGEGIEKAETDFAAEVEAAKAGL</sequence>
<reference key="1">
    <citation type="journal article" date="2007" name="J. Bacteriol.">
        <title>The complete genome sequence of the lactic acid bacterial paradigm Lactococcus lactis subsp. cremoris MG1363.</title>
        <authorList>
            <person name="Wegmann U."/>
            <person name="O'Connell-Motherway M."/>
            <person name="Zomer A."/>
            <person name="Buist G."/>
            <person name="Shearman C."/>
            <person name="Canchaya C."/>
            <person name="Ventura M."/>
            <person name="Goesmann A."/>
            <person name="Gasson M.J."/>
            <person name="Kuipers O.P."/>
            <person name="van Sinderen D."/>
            <person name="Kok J."/>
        </authorList>
    </citation>
    <scope>NUCLEOTIDE SEQUENCE [LARGE SCALE GENOMIC DNA]</scope>
    <source>
        <strain>MG1363</strain>
    </source>
</reference>
<proteinExistence type="inferred from homology"/>
<comment type="function">
    <text evidence="1">Associates with the EF-Tu.GDP complex and induces the exchange of GDP to GTP. It remains bound to the aminoacyl-tRNA.EF-Tu.GTP complex up to the GTP hydrolysis stage on the ribosome.</text>
</comment>
<comment type="subcellular location">
    <subcellularLocation>
        <location evidence="1">Cytoplasm</location>
    </subcellularLocation>
</comment>
<comment type="similarity">
    <text evidence="1">Belongs to the EF-Ts family.</text>
</comment>